<organism>
    <name type="scientific">Citrobacter koseri (strain ATCC BAA-895 / CDC 4225-83 / SGSC4696)</name>
    <dbReference type="NCBI Taxonomy" id="290338"/>
    <lineage>
        <taxon>Bacteria</taxon>
        <taxon>Pseudomonadati</taxon>
        <taxon>Pseudomonadota</taxon>
        <taxon>Gammaproteobacteria</taxon>
        <taxon>Enterobacterales</taxon>
        <taxon>Enterobacteriaceae</taxon>
        <taxon>Citrobacter</taxon>
    </lineage>
</organism>
<accession>A8ANW5</accession>
<protein>
    <recommendedName>
        <fullName evidence="2">Sulfate adenylyltransferase subunit 1</fullName>
        <ecNumber evidence="2">2.7.7.4</ecNumber>
    </recommendedName>
    <alternativeName>
        <fullName evidence="2">ATP-sulfurylase large subunit</fullName>
    </alternativeName>
    <alternativeName>
        <fullName evidence="2">Sulfate adenylate transferase</fullName>
        <shortName evidence="2">SAT</shortName>
    </alternativeName>
</protein>
<sequence>MNTTLAQQIANEGGVEAWMVAQQHKSLLRFLTCGSVDDGKSTLIGRLLHDTRQIYEDQLSSLHNDSKRHGTQGEKLDLALLVDGLQAEREQGITIDVAYRYFSTEKRKFIIADTPGHEQYTRNMATGASTCDLAILLIDARKGVLDQTRRHSFISTLLGIKHLVVAINKMDLVGFSEETFARIREDYLTFAGQLPGNRDIRFVPLSALEGDNVATQSASMPWYNGPTLLEVLETVEIQRVVDTQPMRFPVQYVNRPNLDFRGYAGTLASGSVKVGQRIKVLPSGVESNVARIVTFDGDLQEAHAGEAITLVLKDEIDISRGDLLLDAGENLPAVQSAAVDVVWMAEQPLSAGQSYDIKIAGKKTRARVDAIRHQVDINNLTQREVESLPLNGIGLVELTFDEPLVLDTYQQNPVTGGLIIIDRLSNVTVGAGLVREPIEHTAATPSGFSDFELELNALIRRHFPHWGARDLLGGK</sequence>
<gene>
    <name evidence="2" type="primary">cysN</name>
    <name type="ordered locus">CKO_04112</name>
</gene>
<comment type="function">
    <text evidence="2">With CysD forms the ATP sulfurylase (ATPS) that catalyzes the adenylation of sulfate producing adenosine 5'-phosphosulfate (APS) and diphosphate, the first enzymatic step in sulfur assimilation pathway. APS synthesis involves the formation of a high-energy phosphoric-sulfuric acid anhydride bond driven by GTP hydrolysis by CysN coupled to ATP hydrolysis by CysD.</text>
</comment>
<comment type="catalytic activity">
    <reaction evidence="2">
        <text>sulfate + ATP + H(+) = adenosine 5'-phosphosulfate + diphosphate</text>
        <dbReference type="Rhea" id="RHEA:18133"/>
        <dbReference type="ChEBI" id="CHEBI:15378"/>
        <dbReference type="ChEBI" id="CHEBI:16189"/>
        <dbReference type="ChEBI" id="CHEBI:30616"/>
        <dbReference type="ChEBI" id="CHEBI:33019"/>
        <dbReference type="ChEBI" id="CHEBI:58243"/>
        <dbReference type="EC" id="2.7.7.4"/>
    </reaction>
</comment>
<comment type="pathway">
    <text evidence="2">Sulfur metabolism; hydrogen sulfide biosynthesis; sulfite from sulfate: step 1/3.</text>
</comment>
<comment type="subunit">
    <text evidence="2">Heterodimer composed of CysD, the smaller subunit, and CysN.</text>
</comment>
<comment type="similarity">
    <text evidence="2">Belongs to the TRAFAC class translation factor GTPase superfamily. Classic translation factor GTPase family. CysN/NodQ subfamily.</text>
</comment>
<proteinExistence type="inferred from homology"/>
<dbReference type="EC" id="2.7.7.4" evidence="2"/>
<dbReference type="EMBL" id="CP000822">
    <property type="protein sequence ID" value="ABV15178.1"/>
    <property type="molecule type" value="Genomic_DNA"/>
</dbReference>
<dbReference type="RefSeq" id="WP_012134867.1">
    <property type="nucleotide sequence ID" value="NC_009792.1"/>
</dbReference>
<dbReference type="SMR" id="A8ANW5"/>
<dbReference type="STRING" id="290338.CKO_04112"/>
<dbReference type="GeneID" id="45137749"/>
<dbReference type="KEGG" id="cko:CKO_04112"/>
<dbReference type="HOGENOM" id="CLU_007265_5_2_6"/>
<dbReference type="OrthoDB" id="9804504at2"/>
<dbReference type="UniPathway" id="UPA00140">
    <property type="reaction ID" value="UER00204"/>
</dbReference>
<dbReference type="Proteomes" id="UP000008148">
    <property type="component" value="Chromosome"/>
</dbReference>
<dbReference type="GO" id="GO:0005524">
    <property type="term" value="F:ATP binding"/>
    <property type="evidence" value="ECO:0007669"/>
    <property type="project" value="UniProtKB-KW"/>
</dbReference>
<dbReference type="GO" id="GO:0005525">
    <property type="term" value="F:GTP binding"/>
    <property type="evidence" value="ECO:0007669"/>
    <property type="project" value="UniProtKB-UniRule"/>
</dbReference>
<dbReference type="GO" id="GO:0003924">
    <property type="term" value="F:GTPase activity"/>
    <property type="evidence" value="ECO:0007669"/>
    <property type="project" value="InterPro"/>
</dbReference>
<dbReference type="GO" id="GO:0004781">
    <property type="term" value="F:sulfate adenylyltransferase (ATP) activity"/>
    <property type="evidence" value="ECO:0007669"/>
    <property type="project" value="UniProtKB-UniRule"/>
</dbReference>
<dbReference type="GO" id="GO:0070814">
    <property type="term" value="P:hydrogen sulfide biosynthetic process"/>
    <property type="evidence" value="ECO:0007669"/>
    <property type="project" value="UniProtKB-UniRule"/>
</dbReference>
<dbReference type="GO" id="GO:0000103">
    <property type="term" value="P:sulfate assimilation"/>
    <property type="evidence" value="ECO:0007669"/>
    <property type="project" value="UniProtKB-UniRule"/>
</dbReference>
<dbReference type="CDD" id="cd04166">
    <property type="entry name" value="CysN_ATPS"/>
    <property type="match status" value="1"/>
</dbReference>
<dbReference type="CDD" id="cd03695">
    <property type="entry name" value="CysN_NodQ_II"/>
    <property type="match status" value="1"/>
</dbReference>
<dbReference type="CDD" id="cd04095">
    <property type="entry name" value="CysN_NoDQ_III"/>
    <property type="match status" value="1"/>
</dbReference>
<dbReference type="FunFam" id="2.40.30.10:FF:000027">
    <property type="entry name" value="Sulfate adenylyltransferase subunit 1"/>
    <property type="match status" value="1"/>
</dbReference>
<dbReference type="FunFam" id="2.40.30.10:FF:000031">
    <property type="entry name" value="Sulfate adenylyltransferase subunit 1"/>
    <property type="match status" value="1"/>
</dbReference>
<dbReference type="FunFam" id="3.40.50.300:FF:000119">
    <property type="entry name" value="Sulfate adenylyltransferase subunit 1"/>
    <property type="match status" value="1"/>
</dbReference>
<dbReference type="Gene3D" id="3.40.50.300">
    <property type="entry name" value="P-loop containing nucleotide triphosphate hydrolases"/>
    <property type="match status" value="1"/>
</dbReference>
<dbReference type="Gene3D" id="2.40.30.10">
    <property type="entry name" value="Translation factors"/>
    <property type="match status" value="2"/>
</dbReference>
<dbReference type="HAMAP" id="MF_00062">
    <property type="entry name" value="Sulf_adenylyltr_sub1"/>
    <property type="match status" value="1"/>
</dbReference>
<dbReference type="InterPro" id="IPR041757">
    <property type="entry name" value="CysN_GTP-bd"/>
</dbReference>
<dbReference type="InterPro" id="IPR044138">
    <property type="entry name" value="CysN_II"/>
</dbReference>
<dbReference type="InterPro" id="IPR044139">
    <property type="entry name" value="CysN_NoDQ_III"/>
</dbReference>
<dbReference type="InterPro" id="IPR031157">
    <property type="entry name" value="G_TR_CS"/>
</dbReference>
<dbReference type="InterPro" id="IPR054696">
    <property type="entry name" value="GTP-eEF1A_C"/>
</dbReference>
<dbReference type="InterPro" id="IPR027417">
    <property type="entry name" value="P-loop_NTPase"/>
</dbReference>
<dbReference type="InterPro" id="IPR005225">
    <property type="entry name" value="Small_GTP-bd"/>
</dbReference>
<dbReference type="InterPro" id="IPR011779">
    <property type="entry name" value="SO4_adenylTrfase_lsu"/>
</dbReference>
<dbReference type="InterPro" id="IPR000795">
    <property type="entry name" value="T_Tr_GTP-bd_dom"/>
</dbReference>
<dbReference type="InterPro" id="IPR050100">
    <property type="entry name" value="TRAFAC_GTPase_members"/>
</dbReference>
<dbReference type="InterPro" id="IPR009000">
    <property type="entry name" value="Transl_B-barrel_sf"/>
</dbReference>
<dbReference type="InterPro" id="IPR009001">
    <property type="entry name" value="Transl_elong_EF1A/Init_IF2_C"/>
</dbReference>
<dbReference type="NCBIfam" id="TIGR02034">
    <property type="entry name" value="CysN"/>
    <property type="match status" value="1"/>
</dbReference>
<dbReference type="NCBIfam" id="NF003478">
    <property type="entry name" value="PRK05124.1"/>
    <property type="match status" value="1"/>
</dbReference>
<dbReference type="NCBIfam" id="TIGR00231">
    <property type="entry name" value="small_GTP"/>
    <property type="match status" value="1"/>
</dbReference>
<dbReference type="PANTHER" id="PTHR23115">
    <property type="entry name" value="TRANSLATION FACTOR"/>
    <property type="match status" value="1"/>
</dbReference>
<dbReference type="Pfam" id="PF22594">
    <property type="entry name" value="GTP-eEF1A_C"/>
    <property type="match status" value="1"/>
</dbReference>
<dbReference type="Pfam" id="PF00009">
    <property type="entry name" value="GTP_EFTU"/>
    <property type="match status" value="1"/>
</dbReference>
<dbReference type="PRINTS" id="PR00315">
    <property type="entry name" value="ELONGATNFCT"/>
</dbReference>
<dbReference type="SUPFAM" id="SSF50465">
    <property type="entry name" value="EF-Tu/eEF-1alpha/eIF2-gamma C-terminal domain"/>
    <property type="match status" value="1"/>
</dbReference>
<dbReference type="SUPFAM" id="SSF52540">
    <property type="entry name" value="P-loop containing nucleoside triphosphate hydrolases"/>
    <property type="match status" value="1"/>
</dbReference>
<dbReference type="SUPFAM" id="SSF50447">
    <property type="entry name" value="Translation proteins"/>
    <property type="match status" value="1"/>
</dbReference>
<dbReference type="PROSITE" id="PS00301">
    <property type="entry name" value="G_TR_1"/>
    <property type="match status" value="1"/>
</dbReference>
<dbReference type="PROSITE" id="PS51722">
    <property type="entry name" value="G_TR_2"/>
    <property type="match status" value="1"/>
</dbReference>
<feature type="chain" id="PRO_1000008901" description="Sulfate adenylyltransferase subunit 1">
    <location>
        <begin position="1"/>
        <end position="475"/>
    </location>
</feature>
<feature type="domain" description="tr-type G">
    <location>
        <begin position="25"/>
        <end position="239"/>
    </location>
</feature>
<feature type="region of interest" description="G1" evidence="1">
    <location>
        <begin position="34"/>
        <end position="41"/>
    </location>
</feature>
<feature type="region of interest" description="G2" evidence="1">
    <location>
        <begin position="92"/>
        <end position="96"/>
    </location>
</feature>
<feature type="region of interest" description="G3" evidence="1">
    <location>
        <begin position="113"/>
        <end position="116"/>
    </location>
</feature>
<feature type="region of interest" description="G4" evidence="1">
    <location>
        <begin position="168"/>
        <end position="171"/>
    </location>
</feature>
<feature type="region of interest" description="G5" evidence="1">
    <location>
        <begin position="206"/>
        <end position="208"/>
    </location>
</feature>
<feature type="binding site" evidence="2">
    <location>
        <begin position="34"/>
        <end position="41"/>
    </location>
    <ligand>
        <name>GTP</name>
        <dbReference type="ChEBI" id="CHEBI:37565"/>
    </ligand>
</feature>
<feature type="binding site" evidence="2">
    <location>
        <begin position="113"/>
        <end position="117"/>
    </location>
    <ligand>
        <name>GTP</name>
        <dbReference type="ChEBI" id="CHEBI:37565"/>
    </ligand>
</feature>
<feature type="binding site" evidence="2">
    <location>
        <begin position="168"/>
        <end position="171"/>
    </location>
    <ligand>
        <name>GTP</name>
        <dbReference type="ChEBI" id="CHEBI:37565"/>
    </ligand>
</feature>
<keyword id="KW-0067">ATP-binding</keyword>
<keyword id="KW-0342">GTP-binding</keyword>
<keyword id="KW-0547">Nucleotide-binding</keyword>
<keyword id="KW-0548">Nucleotidyltransferase</keyword>
<keyword id="KW-1185">Reference proteome</keyword>
<keyword id="KW-0808">Transferase</keyword>
<reference key="1">
    <citation type="submission" date="2007-08" db="EMBL/GenBank/DDBJ databases">
        <authorList>
            <consortium name="The Citrobacter koseri Genome Sequencing Project"/>
            <person name="McClelland M."/>
            <person name="Sanderson E.K."/>
            <person name="Porwollik S."/>
            <person name="Spieth J."/>
            <person name="Clifton W.S."/>
            <person name="Latreille P."/>
            <person name="Courtney L."/>
            <person name="Wang C."/>
            <person name="Pepin K."/>
            <person name="Bhonagiri V."/>
            <person name="Nash W."/>
            <person name="Johnson M."/>
            <person name="Thiruvilangam P."/>
            <person name="Wilson R."/>
        </authorList>
    </citation>
    <scope>NUCLEOTIDE SEQUENCE [LARGE SCALE GENOMIC DNA]</scope>
    <source>
        <strain>ATCC BAA-895 / CDC 4225-83 / SGSC4696</strain>
    </source>
</reference>
<evidence type="ECO:0000250" key="1"/>
<evidence type="ECO:0000255" key="2">
    <source>
        <dbReference type="HAMAP-Rule" id="MF_00062"/>
    </source>
</evidence>
<name>CYSN_CITK8</name>